<organism>
    <name type="scientific">Burkholderia multivorans (strain ATCC 17616 / 249)</name>
    <dbReference type="NCBI Taxonomy" id="395019"/>
    <lineage>
        <taxon>Bacteria</taxon>
        <taxon>Pseudomonadati</taxon>
        <taxon>Pseudomonadota</taxon>
        <taxon>Betaproteobacteria</taxon>
        <taxon>Burkholderiales</taxon>
        <taxon>Burkholderiaceae</taxon>
        <taxon>Burkholderia</taxon>
        <taxon>Burkholderia cepacia complex</taxon>
    </lineage>
</organism>
<accession>A9AHB2</accession>
<sequence length="265" mass="27862">MKIAIAGASGRMGRMLIEAVLNDADAQLVGALDRAGSPSLGQDAGAFLGKDTGVKLTDDIDAVFAQADYLIDFTRPEGTLAHVEAALRHDVKLVIGTTGFTAEQKAVLHAAAEKVAIVFAANMSVGVNVTLKLLEFAAKHFSHGYDIEIIEAHHRHKVDAPSGTALMMGEAVAGALGRSLDDCAVYGRHGVTGERDPSTIGFAAVRGGDIVGDHTVLFAGIGERIEITHKSSSRVSYAQGALRAVRFLSARDTGLFDMQDVLGLR</sequence>
<gene>
    <name evidence="1" type="primary">dapB</name>
    <name type="ordered locus">Bmul_2735</name>
    <name type="ordered locus">BMULJ_00502</name>
</gene>
<feature type="chain" id="PRO_1000093949" description="4-hydroxy-tetrahydrodipicolinate reductase">
    <location>
        <begin position="1"/>
        <end position="265"/>
    </location>
</feature>
<feature type="active site" description="Proton donor/acceptor" evidence="1">
    <location>
        <position position="153"/>
    </location>
</feature>
<feature type="active site" description="Proton donor" evidence="1">
    <location>
        <position position="157"/>
    </location>
</feature>
<feature type="binding site" evidence="1">
    <location>
        <begin position="7"/>
        <end position="12"/>
    </location>
    <ligand>
        <name>NAD(+)</name>
        <dbReference type="ChEBI" id="CHEBI:57540"/>
    </ligand>
</feature>
<feature type="binding site" evidence="1">
    <location>
        <position position="33"/>
    </location>
    <ligand>
        <name>NAD(+)</name>
        <dbReference type="ChEBI" id="CHEBI:57540"/>
    </ligand>
</feature>
<feature type="binding site" evidence="1">
    <location>
        <position position="34"/>
    </location>
    <ligand>
        <name>NADP(+)</name>
        <dbReference type="ChEBI" id="CHEBI:58349"/>
    </ligand>
</feature>
<feature type="binding site" evidence="1">
    <location>
        <begin position="96"/>
        <end position="98"/>
    </location>
    <ligand>
        <name>NAD(+)</name>
        <dbReference type="ChEBI" id="CHEBI:57540"/>
    </ligand>
</feature>
<feature type="binding site" evidence="1">
    <location>
        <begin position="120"/>
        <end position="123"/>
    </location>
    <ligand>
        <name>NAD(+)</name>
        <dbReference type="ChEBI" id="CHEBI:57540"/>
    </ligand>
</feature>
<feature type="binding site" evidence="1">
    <location>
        <position position="154"/>
    </location>
    <ligand>
        <name>(S)-2,3,4,5-tetrahydrodipicolinate</name>
        <dbReference type="ChEBI" id="CHEBI:16845"/>
    </ligand>
</feature>
<feature type="binding site" evidence="1">
    <location>
        <begin position="163"/>
        <end position="164"/>
    </location>
    <ligand>
        <name>(S)-2,3,4,5-tetrahydrodipicolinate</name>
        <dbReference type="ChEBI" id="CHEBI:16845"/>
    </ligand>
</feature>
<evidence type="ECO:0000255" key="1">
    <source>
        <dbReference type="HAMAP-Rule" id="MF_00102"/>
    </source>
</evidence>
<evidence type="ECO:0000305" key="2"/>
<name>DAPB_BURM1</name>
<keyword id="KW-0028">Amino-acid biosynthesis</keyword>
<keyword id="KW-0963">Cytoplasm</keyword>
<keyword id="KW-0220">Diaminopimelate biosynthesis</keyword>
<keyword id="KW-0457">Lysine biosynthesis</keyword>
<keyword id="KW-0520">NAD</keyword>
<keyword id="KW-0521">NADP</keyword>
<keyword id="KW-0560">Oxidoreductase</keyword>
<keyword id="KW-1185">Reference proteome</keyword>
<protein>
    <recommendedName>
        <fullName evidence="1">4-hydroxy-tetrahydrodipicolinate reductase</fullName>
        <shortName evidence="1">HTPA reductase</shortName>
        <ecNumber evidence="1">1.17.1.8</ecNumber>
    </recommendedName>
</protein>
<proteinExistence type="inferred from homology"/>
<reference key="1">
    <citation type="submission" date="2007-10" db="EMBL/GenBank/DDBJ databases">
        <title>Complete sequence of chromosome 1 of Burkholderia multivorans ATCC 17616.</title>
        <authorList>
            <person name="Copeland A."/>
            <person name="Lucas S."/>
            <person name="Lapidus A."/>
            <person name="Barry K."/>
            <person name="Glavina del Rio T."/>
            <person name="Dalin E."/>
            <person name="Tice H."/>
            <person name="Pitluck S."/>
            <person name="Chain P."/>
            <person name="Malfatti S."/>
            <person name="Shin M."/>
            <person name="Vergez L."/>
            <person name="Schmutz J."/>
            <person name="Larimer F."/>
            <person name="Land M."/>
            <person name="Hauser L."/>
            <person name="Kyrpides N."/>
            <person name="Kim E."/>
            <person name="Tiedje J."/>
            <person name="Richardson P."/>
        </authorList>
    </citation>
    <scope>NUCLEOTIDE SEQUENCE [LARGE SCALE GENOMIC DNA]</scope>
    <source>
        <strain>ATCC 17616 / 249</strain>
    </source>
</reference>
<reference key="2">
    <citation type="submission" date="2007-04" db="EMBL/GenBank/DDBJ databases">
        <title>Complete genome sequence of Burkholderia multivorans ATCC 17616.</title>
        <authorList>
            <person name="Ohtsubo Y."/>
            <person name="Yamashita A."/>
            <person name="Kurokawa K."/>
            <person name="Takami H."/>
            <person name="Yuhara S."/>
            <person name="Nishiyama E."/>
            <person name="Endo R."/>
            <person name="Miyazaki R."/>
            <person name="Ono A."/>
            <person name="Yano K."/>
            <person name="Ito M."/>
            <person name="Sota M."/>
            <person name="Yuji N."/>
            <person name="Hattori M."/>
            <person name="Tsuda M."/>
        </authorList>
    </citation>
    <scope>NUCLEOTIDE SEQUENCE [LARGE SCALE GENOMIC DNA]</scope>
    <source>
        <strain>ATCC 17616 / 249</strain>
    </source>
</reference>
<dbReference type="EC" id="1.17.1.8" evidence="1"/>
<dbReference type="EMBL" id="CP000868">
    <property type="protein sequence ID" value="ABX16419.1"/>
    <property type="molecule type" value="Genomic_DNA"/>
</dbReference>
<dbReference type="EMBL" id="AP009385">
    <property type="protein sequence ID" value="BAG42469.1"/>
    <property type="molecule type" value="Genomic_DNA"/>
</dbReference>
<dbReference type="RefSeq" id="WP_006407572.1">
    <property type="nucleotide sequence ID" value="NC_010084.1"/>
</dbReference>
<dbReference type="SMR" id="A9AHB2"/>
<dbReference type="STRING" id="395019.BMULJ_00502"/>
<dbReference type="GeneID" id="89568931"/>
<dbReference type="KEGG" id="bmj:BMULJ_00502"/>
<dbReference type="KEGG" id="bmu:Bmul_2735"/>
<dbReference type="eggNOG" id="COG0289">
    <property type="taxonomic scope" value="Bacteria"/>
</dbReference>
<dbReference type="HOGENOM" id="CLU_047479_2_1_4"/>
<dbReference type="UniPathway" id="UPA00034">
    <property type="reaction ID" value="UER00018"/>
</dbReference>
<dbReference type="Proteomes" id="UP000008815">
    <property type="component" value="Chromosome 1"/>
</dbReference>
<dbReference type="GO" id="GO:0005829">
    <property type="term" value="C:cytosol"/>
    <property type="evidence" value="ECO:0007669"/>
    <property type="project" value="TreeGrafter"/>
</dbReference>
<dbReference type="GO" id="GO:0008839">
    <property type="term" value="F:4-hydroxy-tetrahydrodipicolinate reductase"/>
    <property type="evidence" value="ECO:0007669"/>
    <property type="project" value="UniProtKB-EC"/>
</dbReference>
<dbReference type="GO" id="GO:0051287">
    <property type="term" value="F:NAD binding"/>
    <property type="evidence" value="ECO:0007669"/>
    <property type="project" value="UniProtKB-UniRule"/>
</dbReference>
<dbReference type="GO" id="GO:0050661">
    <property type="term" value="F:NADP binding"/>
    <property type="evidence" value="ECO:0007669"/>
    <property type="project" value="UniProtKB-UniRule"/>
</dbReference>
<dbReference type="GO" id="GO:0016726">
    <property type="term" value="F:oxidoreductase activity, acting on CH or CH2 groups, NAD or NADP as acceptor"/>
    <property type="evidence" value="ECO:0007669"/>
    <property type="project" value="UniProtKB-UniRule"/>
</dbReference>
<dbReference type="GO" id="GO:0019877">
    <property type="term" value="P:diaminopimelate biosynthetic process"/>
    <property type="evidence" value="ECO:0007669"/>
    <property type="project" value="UniProtKB-UniRule"/>
</dbReference>
<dbReference type="GO" id="GO:0009089">
    <property type="term" value="P:lysine biosynthetic process via diaminopimelate"/>
    <property type="evidence" value="ECO:0007669"/>
    <property type="project" value="UniProtKB-UniRule"/>
</dbReference>
<dbReference type="CDD" id="cd02274">
    <property type="entry name" value="DHDPR_N"/>
    <property type="match status" value="1"/>
</dbReference>
<dbReference type="FunFam" id="3.30.360.10:FF:000004">
    <property type="entry name" value="4-hydroxy-tetrahydrodipicolinate reductase"/>
    <property type="match status" value="1"/>
</dbReference>
<dbReference type="FunFam" id="3.40.50.720:FF:000048">
    <property type="entry name" value="4-hydroxy-tetrahydrodipicolinate reductase"/>
    <property type="match status" value="1"/>
</dbReference>
<dbReference type="Gene3D" id="3.30.360.10">
    <property type="entry name" value="Dihydrodipicolinate Reductase, domain 2"/>
    <property type="match status" value="1"/>
</dbReference>
<dbReference type="Gene3D" id="3.40.50.720">
    <property type="entry name" value="NAD(P)-binding Rossmann-like Domain"/>
    <property type="match status" value="1"/>
</dbReference>
<dbReference type="HAMAP" id="MF_00102">
    <property type="entry name" value="DapB"/>
    <property type="match status" value="1"/>
</dbReference>
<dbReference type="InterPro" id="IPR022663">
    <property type="entry name" value="DapB_C"/>
</dbReference>
<dbReference type="InterPro" id="IPR000846">
    <property type="entry name" value="DapB_N"/>
</dbReference>
<dbReference type="InterPro" id="IPR022664">
    <property type="entry name" value="DapB_N_CS"/>
</dbReference>
<dbReference type="InterPro" id="IPR023940">
    <property type="entry name" value="DHDPR_bac"/>
</dbReference>
<dbReference type="InterPro" id="IPR036291">
    <property type="entry name" value="NAD(P)-bd_dom_sf"/>
</dbReference>
<dbReference type="NCBIfam" id="TIGR00036">
    <property type="entry name" value="dapB"/>
    <property type="match status" value="1"/>
</dbReference>
<dbReference type="PANTHER" id="PTHR20836:SF0">
    <property type="entry name" value="4-HYDROXY-TETRAHYDRODIPICOLINATE REDUCTASE 1, CHLOROPLASTIC-RELATED"/>
    <property type="match status" value="1"/>
</dbReference>
<dbReference type="PANTHER" id="PTHR20836">
    <property type="entry name" value="DIHYDRODIPICOLINATE REDUCTASE"/>
    <property type="match status" value="1"/>
</dbReference>
<dbReference type="Pfam" id="PF05173">
    <property type="entry name" value="DapB_C"/>
    <property type="match status" value="1"/>
</dbReference>
<dbReference type="Pfam" id="PF01113">
    <property type="entry name" value="DapB_N"/>
    <property type="match status" value="1"/>
</dbReference>
<dbReference type="PIRSF" id="PIRSF000161">
    <property type="entry name" value="DHPR"/>
    <property type="match status" value="1"/>
</dbReference>
<dbReference type="SUPFAM" id="SSF55347">
    <property type="entry name" value="Glyceraldehyde-3-phosphate dehydrogenase-like, C-terminal domain"/>
    <property type="match status" value="1"/>
</dbReference>
<dbReference type="SUPFAM" id="SSF51735">
    <property type="entry name" value="NAD(P)-binding Rossmann-fold domains"/>
    <property type="match status" value="1"/>
</dbReference>
<dbReference type="PROSITE" id="PS01298">
    <property type="entry name" value="DAPB"/>
    <property type="match status" value="1"/>
</dbReference>
<comment type="function">
    <text evidence="1">Catalyzes the conversion of 4-hydroxy-tetrahydrodipicolinate (HTPA) to tetrahydrodipicolinate.</text>
</comment>
<comment type="catalytic activity">
    <reaction evidence="1">
        <text>(S)-2,3,4,5-tetrahydrodipicolinate + NAD(+) + H2O = (2S,4S)-4-hydroxy-2,3,4,5-tetrahydrodipicolinate + NADH + H(+)</text>
        <dbReference type="Rhea" id="RHEA:35323"/>
        <dbReference type="ChEBI" id="CHEBI:15377"/>
        <dbReference type="ChEBI" id="CHEBI:15378"/>
        <dbReference type="ChEBI" id="CHEBI:16845"/>
        <dbReference type="ChEBI" id="CHEBI:57540"/>
        <dbReference type="ChEBI" id="CHEBI:57945"/>
        <dbReference type="ChEBI" id="CHEBI:67139"/>
        <dbReference type="EC" id="1.17.1.8"/>
    </reaction>
</comment>
<comment type="catalytic activity">
    <reaction evidence="1">
        <text>(S)-2,3,4,5-tetrahydrodipicolinate + NADP(+) + H2O = (2S,4S)-4-hydroxy-2,3,4,5-tetrahydrodipicolinate + NADPH + H(+)</text>
        <dbReference type="Rhea" id="RHEA:35331"/>
        <dbReference type="ChEBI" id="CHEBI:15377"/>
        <dbReference type="ChEBI" id="CHEBI:15378"/>
        <dbReference type="ChEBI" id="CHEBI:16845"/>
        <dbReference type="ChEBI" id="CHEBI:57783"/>
        <dbReference type="ChEBI" id="CHEBI:58349"/>
        <dbReference type="ChEBI" id="CHEBI:67139"/>
        <dbReference type="EC" id="1.17.1.8"/>
    </reaction>
</comment>
<comment type="pathway">
    <text evidence="1">Amino-acid biosynthesis; L-lysine biosynthesis via DAP pathway; (S)-tetrahydrodipicolinate from L-aspartate: step 4/4.</text>
</comment>
<comment type="subcellular location">
    <subcellularLocation>
        <location evidence="1">Cytoplasm</location>
    </subcellularLocation>
</comment>
<comment type="similarity">
    <text evidence="1">Belongs to the DapB family.</text>
</comment>
<comment type="caution">
    <text evidence="2">Was originally thought to be a dihydrodipicolinate reductase (DHDPR), catalyzing the conversion of dihydrodipicolinate to tetrahydrodipicolinate. However, it was shown in E.coli that the substrate of the enzymatic reaction is not dihydrodipicolinate (DHDP) but in fact (2S,4S)-4-hydroxy-2,3,4,5-tetrahydrodipicolinic acid (HTPA), the product released by the DapA-catalyzed reaction.</text>
</comment>